<accession>A6QGE0</accession>
<protein>
    <recommendedName>
        <fullName evidence="1">tRNA (guanine-N(1)-)-methyltransferase</fullName>
        <ecNumber evidence="1">2.1.1.228</ecNumber>
    </recommendedName>
    <alternativeName>
        <fullName evidence="1">M1G-methyltransferase</fullName>
    </alternativeName>
    <alternativeName>
        <fullName evidence="1">tRNA [GM37] methyltransferase</fullName>
    </alternativeName>
</protein>
<gene>
    <name evidence="1" type="primary">trmD</name>
    <name type="ordered locus">NWMN_1150</name>
</gene>
<proteinExistence type="inferred from homology"/>
<keyword id="KW-0963">Cytoplasm</keyword>
<keyword id="KW-0489">Methyltransferase</keyword>
<keyword id="KW-0949">S-adenosyl-L-methionine</keyword>
<keyword id="KW-0808">Transferase</keyword>
<keyword id="KW-0819">tRNA processing</keyword>
<sequence length="245" mass="28056">MKIDYLTLFPEMFDGVLNHSIMKRAQENNKLQINTVNFRDYAINKHNQVDDYPYGGGQGMVLKPEPVFNAMEDLDVTEQTRVILMCPQGEPFSHQKAVELSKADHIVFICGHYEGYDERIRTHLVTDEISMGDYVLTGGELPAMTMTDAIVRLIPGVLGNEQSHQDDSFSDGLLEFPQYTRPREFKGLTVPDVLLSGNHANIDAWRHEQKLIRTYNKRPDLIEKYPLTNADKQILERYKIGLKKG</sequence>
<reference key="1">
    <citation type="journal article" date="2008" name="J. Bacteriol.">
        <title>Genome sequence of Staphylococcus aureus strain Newman and comparative analysis of staphylococcal genomes: polymorphism and evolution of two major pathogenicity islands.</title>
        <authorList>
            <person name="Baba T."/>
            <person name="Bae T."/>
            <person name="Schneewind O."/>
            <person name="Takeuchi F."/>
            <person name="Hiramatsu K."/>
        </authorList>
    </citation>
    <scope>NUCLEOTIDE SEQUENCE [LARGE SCALE GENOMIC DNA]</scope>
    <source>
        <strain>Newman</strain>
    </source>
</reference>
<name>TRMD_STAAE</name>
<dbReference type="EC" id="2.1.1.228" evidence="1"/>
<dbReference type="EMBL" id="AP009351">
    <property type="protein sequence ID" value="BAF67422.1"/>
    <property type="molecule type" value="Genomic_DNA"/>
</dbReference>
<dbReference type="RefSeq" id="WP_000687328.1">
    <property type="nucleotide sequence ID" value="NZ_JBBIAE010000001.1"/>
</dbReference>
<dbReference type="SMR" id="A6QGE0"/>
<dbReference type="KEGG" id="sae:NWMN_1150"/>
<dbReference type="HOGENOM" id="CLU_047363_0_1_9"/>
<dbReference type="Proteomes" id="UP000006386">
    <property type="component" value="Chromosome"/>
</dbReference>
<dbReference type="GO" id="GO:0005829">
    <property type="term" value="C:cytosol"/>
    <property type="evidence" value="ECO:0007669"/>
    <property type="project" value="TreeGrafter"/>
</dbReference>
<dbReference type="GO" id="GO:0052906">
    <property type="term" value="F:tRNA (guanine(37)-N1)-methyltransferase activity"/>
    <property type="evidence" value="ECO:0007669"/>
    <property type="project" value="UniProtKB-UniRule"/>
</dbReference>
<dbReference type="GO" id="GO:0002939">
    <property type="term" value="P:tRNA N1-guanine methylation"/>
    <property type="evidence" value="ECO:0007669"/>
    <property type="project" value="TreeGrafter"/>
</dbReference>
<dbReference type="CDD" id="cd18080">
    <property type="entry name" value="TrmD-like"/>
    <property type="match status" value="1"/>
</dbReference>
<dbReference type="FunFam" id="1.10.1270.20:FF:000001">
    <property type="entry name" value="tRNA (guanine-N(1)-)-methyltransferase"/>
    <property type="match status" value="1"/>
</dbReference>
<dbReference type="FunFam" id="3.40.1280.10:FF:000001">
    <property type="entry name" value="tRNA (guanine-N(1)-)-methyltransferase"/>
    <property type="match status" value="1"/>
</dbReference>
<dbReference type="Gene3D" id="3.40.1280.10">
    <property type="match status" value="1"/>
</dbReference>
<dbReference type="Gene3D" id="1.10.1270.20">
    <property type="entry name" value="tRNA(m1g37)methyltransferase, domain 2"/>
    <property type="match status" value="1"/>
</dbReference>
<dbReference type="HAMAP" id="MF_00605">
    <property type="entry name" value="TrmD"/>
    <property type="match status" value="1"/>
</dbReference>
<dbReference type="InterPro" id="IPR029028">
    <property type="entry name" value="Alpha/beta_knot_MTases"/>
</dbReference>
<dbReference type="InterPro" id="IPR023148">
    <property type="entry name" value="tRNA_m1G_MeTrfase_C_sf"/>
</dbReference>
<dbReference type="InterPro" id="IPR002649">
    <property type="entry name" value="tRNA_m1G_MeTrfase_TrmD"/>
</dbReference>
<dbReference type="InterPro" id="IPR029026">
    <property type="entry name" value="tRNA_m1G_MTases_N"/>
</dbReference>
<dbReference type="InterPro" id="IPR016009">
    <property type="entry name" value="tRNA_MeTrfase_TRMD/TRM10"/>
</dbReference>
<dbReference type="NCBIfam" id="NF000648">
    <property type="entry name" value="PRK00026.1"/>
    <property type="match status" value="1"/>
</dbReference>
<dbReference type="NCBIfam" id="TIGR00088">
    <property type="entry name" value="trmD"/>
    <property type="match status" value="1"/>
</dbReference>
<dbReference type="PANTHER" id="PTHR46417">
    <property type="entry name" value="TRNA (GUANINE-N(1)-)-METHYLTRANSFERASE"/>
    <property type="match status" value="1"/>
</dbReference>
<dbReference type="PANTHER" id="PTHR46417:SF1">
    <property type="entry name" value="TRNA (GUANINE-N(1)-)-METHYLTRANSFERASE"/>
    <property type="match status" value="1"/>
</dbReference>
<dbReference type="Pfam" id="PF01746">
    <property type="entry name" value="tRNA_m1G_MT"/>
    <property type="match status" value="1"/>
</dbReference>
<dbReference type="PIRSF" id="PIRSF000386">
    <property type="entry name" value="tRNA_mtase"/>
    <property type="match status" value="1"/>
</dbReference>
<dbReference type="SUPFAM" id="SSF75217">
    <property type="entry name" value="alpha/beta knot"/>
    <property type="match status" value="1"/>
</dbReference>
<evidence type="ECO:0000255" key="1">
    <source>
        <dbReference type="HAMAP-Rule" id="MF_00605"/>
    </source>
</evidence>
<organism>
    <name type="scientific">Staphylococcus aureus (strain Newman)</name>
    <dbReference type="NCBI Taxonomy" id="426430"/>
    <lineage>
        <taxon>Bacteria</taxon>
        <taxon>Bacillati</taxon>
        <taxon>Bacillota</taxon>
        <taxon>Bacilli</taxon>
        <taxon>Bacillales</taxon>
        <taxon>Staphylococcaceae</taxon>
        <taxon>Staphylococcus</taxon>
    </lineage>
</organism>
<feature type="chain" id="PRO_1000072643" description="tRNA (guanine-N(1)-)-methyltransferase">
    <location>
        <begin position="1"/>
        <end position="245"/>
    </location>
</feature>
<feature type="binding site" evidence="1">
    <location>
        <position position="111"/>
    </location>
    <ligand>
        <name>S-adenosyl-L-methionine</name>
        <dbReference type="ChEBI" id="CHEBI:59789"/>
    </ligand>
</feature>
<feature type="binding site" evidence="1">
    <location>
        <begin position="131"/>
        <end position="136"/>
    </location>
    <ligand>
        <name>S-adenosyl-L-methionine</name>
        <dbReference type="ChEBI" id="CHEBI:59789"/>
    </ligand>
</feature>
<comment type="function">
    <text evidence="1">Specifically methylates guanosine-37 in various tRNAs.</text>
</comment>
<comment type="catalytic activity">
    <reaction evidence="1">
        <text>guanosine(37) in tRNA + S-adenosyl-L-methionine = N(1)-methylguanosine(37) in tRNA + S-adenosyl-L-homocysteine + H(+)</text>
        <dbReference type="Rhea" id="RHEA:36899"/>
        <dbReference type="Rhea" id="RHEA-COMP:10145"/>
        <dbReference type="Rhea" id="RHEA-COMP:10147"/>
        <dbReference type="ChEBI" id="CHEBI:15378"/>
        <dbReference type="ChEBI" id="CHEBI:57856"/>
        <dbReference type="ChEBI" id="CHEBI:59789"/>
        <dbReference type="ChEBI" id="CHEBI:73542"/>
        <dbReference type="ChEBI" id="CHEBI:74269"/>
        <dbReference type="EC" id="2.1.1.228"/>
    </reaction>
</comment>
<comment type="subunit">
    <text evidence="1">Homodimer.</text>
</comment>
<comment type="subcellular location">
    <subcellularLocation>
        <location evidence="1">Cytoplasm</location>
    </subcellularLocation>
</comment>
<comment type="similarity">
    <text evidence="1">Belongs to the RNA methyltransferase TrmD family.</text>
</comment>